<gene>
    <name evidence="22 27" type="primary">NSUN2</name>
    <name evidence="22" type="synonym">SAKI</name>
    <name evidence="21" type="synonym">TRM4</name>
</gene>
<evidence type="ECO:0000250" key="1">
    <source>
        <dbReference type="UniProtKB" id="Q1HFZ0"/>
    </source>
</evidence>
<evidence type="ECO:0000255" key="2">
    <source>
        <dbReference type="PROSITE-ProRule" id="PRU01023"/>
    </source>
</evidence>
<evidence type="ECO:0000256" key="3">
    <source>
        <dbReference type="SAM" id="MobiDB-lite"/>
    </source>
</evidence>
<evidence type="ECO:0000269" key="4">
    <source>
    </source>
</evidence>
<evidence type="ECO:0000269" key="5">
    <source>
    </source>
</evidence>
<evidence type="ECO:0000269" key="6">
    <source>
    </source>
</evidence>
<evidence type="ECO:0000269" key="7">
    <source>
    </source>
</evidence>
<evidence type="ECO:0000269" key="8">
    <source>
    </source>
</evidence>
<evidence type="ECO:0000269" key="9">
    <source>
    </source>
</evidence>
<evidence type="ECO:0000269" key="10">
    <source>
    </source>
</evidence>
<evidence type="ECO:0000269" key="11">
    <source>
    </source>
</evidence>
<evidence type="ECO:0000269" key="12">
    <source>
    </source>
</evidence>
<evidence type="ECO:0000269" key="13">
    <source>
    </source>
</evidence>
<evidence type="ECO:0000269" key="14">
    <source>
    </source>
</evidence>
<evidence type="ECO:0000269" key="15">
    <source>
    </source>
</evidence>
<evidence type="ECO:0000269" key="16">
    <source>
    </source>
</evidence>
<evidence type="ECO:0000269" key="17">
    <source>
    </source>
</evidence>
<evidence type="ECO:0000269" key="18">
    <source>
    </source>
</evidence>
<evidence type="ECO:0000269" key="19">
    <source>
    </source>
</evidence>
<evidence type="ECO:0000303" key="20">
    <source>
    </source>
</evidence>
<evidence type="ECO:0000303" key="21">
    <source>
    </source>
</evidence>
<evidence type="ECO:0000303" key="22">
    <source>
    </source>
</evidence>
<evidence type="ECO:0000303" key="23">
    <source>
    </source>
</evidence>
<evidence type="ECO:0000305" key="24"/>
<evidence type="ECO:0000305" key="25">
    <source>
    </source>
</evidence>
<evidence type="ECO:0000305" key="26">
    <source>
    </source>
</evidence>
<evidence type="ECO:0000312" key="27">
    <source>
        <dbReference type="HGNC" id="HGNC:25994"/>
    </source>
</evidence>
<evidence type="ECO:0007744" key="28">
    <source>
    </source>
</evidence>
<evidence type="ECO:0007744" key="29">
    <source>
    </source>
</evidence>
<evidence type="ECO:0007744" key="30">
    <source>
    </source>
</evidence>
<evidence type="ECO:0007744" key="31">
    <source>
    </source>
</evidence>
<evidence type="ECO:0007744" key="32">
    <source>
    </source>
</evidence>
<evidence type="ECO:0007744" key="33">
    <source>
    </source>
</evidence>
<evidence type="ECO:0007744" key="34">
    <source>
    </source>
</evidence>
<evidence type="ECO:0007744" key="35">
    <source>
    </source>
</evidence>
<evidence type="ECO:0007744" key="36">
    <source>
    </source>
</evidence>
<evidence type="ECO:0007744" key="37">
    <source>
    </source>
</evidence>
<evidence type="ECO:0007744" key="38">
    <source>
    </source>
</evidence>
<name>NSUN2_HUMAN</name>
<keyword id="KW-0007">Acetylation</keyword>
<keyword id="KW-0025">Alternative splicing</keyword>
<keyword id="KW-0131">Cell cycle</keyword>
<keyword id="KW-0132">Cell division</keyword>
<keyword id="KW-0963">Cytoplasm</keyword>
<keyword id="KW-0206">Cytoskeleton</keyword>
<keyword id="KW-0221">Differentiation</keyword>
<keyword id="KW-0903">Direct protein sequencing</keyword>
<keyword id="KW-0225">Disease variant</keyword>
<keyword id="KW-0991">Intellectual disability</keyword>
<keyword id="KW-1017">Isopeptide bond</keyword>
<keyword id="KW-0489">Methyltransferase</keyword>
<keyword id="KW-0496">Mitochondrion</keyword>
<keyword id="KW-0498">Mitosis</keyword>
<keyword id="KW-0539">Nucleus</keyword>
<keyword id="KW-0597">Phosphoprotein</keyword>
<keyword id="KW-1267">Proteomics identification</keyword>
<keyword id="KW-1185">Reference proteome</keyword>
<keyword id="KW-0694">RNA-binding</keyword>
<keyword id="KW-0949">S-adenosyl-L-methionine</keyword>
<keyword id="KW-0964">Secreted</keyword>
<keyword id="KW-0744">Spermatogenesis</keyword>
<keyword id="KW-0808">Transferase</keyword>
<keyword id="KW-0819">tRNA processing</keyword>
<keyword id="KW-0820">tRNA-binding</keyword>
<keyword id="KW-0832">Ubl conjugation</keyword>
<comment type="function">
    <text evidence="1 4 6 8 11 12 13 14 15 16 18 19">RNA cytosine C(5)-methyltransferase that methylates cytosine to 5-methylcytosine (m5C) in various RNAs, such as tRNAs, mRNAs and some long non-coding RNAs (lncRNAs) (PubMed:17071714, PubMed:22995836, PubMed:31199786, PubMed:31358969). Involved in various processes, such as epidermal stem cell differentiation, testis differentiation and maternal to zygotic transition during early development: acts by increasing protein synthesis; cytosine C(5)-methylation promoting tRNA stability and preventing mRNA decay (PubMed:31199786). Methylates cytosine to 5-methylcytosine (m5C) at positions 34 and 48 of intron-containing tRNA(Leu)(CAA) precursors, and at positions 48, 49 and 50 of tRNA(Gly)(GCC) precursors (PubMed:17071714, PubMed:22995836, PubMed:31199786). tRNA methylation is required generation of RNA fragments derived from tRNAs (tRFs) (PubMed:31199786). Also mediates C(5)-methylation of mitochondrial tRNAs (PubMed:31276587). Catalyzes cytosine C(5)-methylation of mRNAs, leading to stabilize them and prevent mRNA decay: mRNA stabilization involves YBX1 that specifically recognizes and binds m5C-modified transcripts (PubMed:22395603, PubMed:31358969, PubMed:34556860). Cytosine C(5)-methylation of mRNAs also regulates mRNA export: methylated transcripts are specifically recognized by THOC4/ALYREF, which mediates mRNA nucleo-cytoplasmic shuttling (PubMed:28418038). Also mediates cytosine C(5)-methylation of non-coding RNAs, such as vault RNAs (vtRNAs), promoting their processing into regulatory small RNAs (PubMed:23871666). Cytosine C(5)-methylation of vtRNA VTRNA1.1 promotes its processing into small-vault RNA4 (svRNA4) and regulates epidermal differentiation (PubMed:31186410). May act downstream of Myc to regulate epidermal cell growth and proliferation (By similarity). Required for proper spindle assembly and chromosome segregation, independently of its methyltransferase activity (PubMed:19596847).</text>
</comment>
<comment type="catalytic activity">
    <reaction evidence="16">
        <text>cytidine(48) in tRNA + S-adenosyl-L-methionine = 5-methylcytidine(48) in tRNA + S-adenosyl-L-homocysteine + H(+)</text>
        <dbReference type="Rhea" id="RHEA:42948"/>
        <dbReference type="Rhea" id="RHEA-COMP:10293"/>
        <dbReference type="Rhea" id="RHEA-COMP:10297"/>
        <dbReference type="ChEBI" id="CHEBI:15378"/>
        <dbReference type="ChEBI" id="CHEBI:57856"/>
        <dbReference type="ChEBI" id="CHEBI:59789"/>
        <dbReference type="ChEBI" id="CHEBI:74483"/>
        <dbReference type="ChEBI" id="CHEBI:82748"/>
    </reaction>
    <physiologicalReaction direction="left-to-right" evidence="16">
        <dbReference type="Rhea" id="RHEA:42949"/>
    </physiologicalReaction>
</comment>
<comment type="catalytic activity">
    <reaction evidence="16">
        <text>cytidine(49) in tRNA + S-adenosyl-L-methionine = 5-methylcytidine(49) in tRNA + S-adenosyl-L-homocysteine + H(+)</text>
        <dbReference type="Rhea" id="RHEA:42952"/>
        <dbReference type="Rhea" id="RHEA-COMP:10294"/>
        <dbReference type="Rhea" id="RHEA-COMP:10385"/>
        <dbReference type="ChEBI" id="CHEBI:15378"/>
        <dbReference type="ChEBI" id="CHEBI:57856"/>
        <dbReference type="ChEBI" id="CHEBI:59789"/>
        <dbReference type="ChEBI" id="CHEBI:74483"/>
        <dbReference type="ChEBI" id="CHEBI:82748"/>
    </reaction>
    <physiologicalReaction direction="left-to-right" evidence="16">
        <dbReference type="Rhea" id="RHEA:42953"/>
    </physiologicalReaction>
</comment>
<comment type="catalytic activity">
    <reaction evidence="16">
        <text>cytidine(50) in tRNA + S-adenosyl-L-methionine = 5-methylcytidine(50) in tRNA + S-adenosyl-L-homocysteine + H(+)</text>
        <dbReference type="Rhea" id="RHEA:61488"/>
        <dbReference type="Rhea" id="RHEA-COMP:15838"/>
        <dbReference type="Rhea" id="RHEA-COMP:15839"/>
        <dbReference type="ChEBI" id="CHEBI:15378"/>
        <dbReference type="ChEBI" id="CHEBI:57856"/>
        <dbReference type="ChEBI" id="CHEBI:59789"/>
        <dbReference type="ChEBI" id="CHEBI:74483"/>
        <dbReference type="ChEBI" id="CHEBI:82748"/>
    </reaction>
    <physiologicalReaction direction="left-to-right" evidence="16">
        <dbReference type="Rhea" id="RHEA:61489"/>
    </physiologicalReaction>
</comment>
<comment type="catalytic activity">
    <reaction evidence="4">
        <text>cytidine(34) in tRNA precursor + S-adenosyl-L-methionine = 5-methylcytidine(34) in tRNA precursor + S-adenosyl-L-homocysteine + H(+)</text>
        <dbReference type="Rhea" id="RHEA:42940"/>
        <dbReference type="Rhea" id="RHEA-COMP:10291"/>
        <dbReference type="Rhea" id="RHEA-COMP:10295"/>
        <dbReference type="ChEBI" id="CHEBI:15378"/>
        <dbReference type="ChEBI" id="CHEBI:57856"/>
        <dbReference type="ChEBI" id="CHEBI:59789"/>
        <dbReference type="ChEBI" id="CHEBI:74483"/>
        <dbReference type="ChEBI" id="CHEBI:82748"/>
        <dbReference type="EC" id="2.1.1.203"/>
    </reaction>
    <physiologicalReaction direction="left-to-right" evidence="4">
        <dbReference type="Rhea" id="RHEA:42941"/>
    </physiologicalReaction>
</comment>
<comment type="catalytic activity">
    <reaction evidence="8 13 18 19">
        <text>a cytidine in mRNA + S-adenosyl-L-methionine = a 5-methylcytidine in mRNA + S-adenosyl-L-homocysteine + H(+)</text>
        <dbReference type="Rhea" id="RHEA:61464"/>
        <dbReference type="Rhea" id="RHEA-COMP:15145"/>
        <dbReference type="Rhea" id="RHEA-COMP:15826"/>
        <dbReference type="ChEBI" id="CHEBI:15378"/>
        <dbReference type="ChEBI" id="CHEBI:57856"/>
        <dbReference type="ChEBI" id="CHEBI:59789"/>
        <dbReference type="ChEBI" id="CHEBI:74483"/>
        <dbReference type="ChEBI" id="CHEBI:82748"/>
    </reaction>
    <physiologicalReaction direction="left-to-right" evidence="8 13 18">
        <dbReference type="Rhea" id="RHEA:61465"/>
    </physiologicalReaction>
</comment>
<comment type="activity regulation">
    <text evidence="11">Inhibited by magnesium ions.</text>
</comment>
<comment type="subunit">
    <text evidence="5">Interacts with NPM1 and NCL during interphase; interaction is disrupted following phosphorylation at Ser-139.</text>
</comment>
<comment type="interaction">
    <interactant intactId="EBI-1642839">
        <id>Q08J23</id>
    </interactant>
    <interactant intactId="EBI-954357">
        <id>Q05086</id>
        <label>UBE3A</label>
    </interactant>
    <organismsDiffer>false</organismsDiffer>
    <experiments>2</experiments>
</comment>
<comment type="subcellular location">
    <subcellularLocation>
        <location evidence="4 5 16">Nucleus</location>
        <location evidence="4 5 16">Nucleolus</location>
    </subcellularLocation>
    <subcellularLocation>
        <location evidence="4 16">Cytoplasm</location>
    </subcellularLocation>
    <subcellularLocation>
        <location evidence="16 17">Mitochondrion</location>
    </subcellularLocation>
    <subcellularLocation>
        <location evidence="6">Cytoplasm</location>
        <location evidence="6">Cytoskeleton</location>
        <location evidence="6">Spindle</location>
    </subcellularLocation>
    <subcellularLocation>
        <location evidence="1">Secreted</location>
        <location evidence="1">Extracellular exosome</location>
    </subcellularLocation>
    <text evidence="1 6">Concentrated in the nucleolus during interphase and translocates to the spindle during mitosis as an RNA-protein complex that includes 18S ribosomal RNA (PubMed:19596847). In testis, localizes to the chromatoid body (By similarity).</text>
</comment>
<comment type="alternative products">
    <event type="alternative splicing"/>
    <isoform>
        <id>Q08J23-1</id>
        <name>1</name>
        <sequence type="displayed"/>
    </isoform>
    <isoform>
        <id>Q08J23-2</id>
        <name>2</name>
        <sequence type="described" ref="VSP_042621"/>
    </isoform>
    <isoform>
        <id>Q08J23-3</id>
        <name>3</name>
        <sequence type="described" ref="VSP_053598"/>
    </isoform>
</comment>
<comment type="tissue specificity">
    <text evidence="9">Expressed in adult and fetal brain and in lymphoblastoid cells.</text>
</comment>
<comment type="PTM">
    <text evidence="5">Phosphorylated at Ser-139 by AURKB during mitosis, leading to abolish methyltransferase activity and the interaction with NPM1.</text>
</comment>
<comment type="disease" evidence="9 10">
    <disease id="DI-03476">
        <name>Intellectual developmental disorder, autosomal recessive 5</name>
        <acronym>MRT5</acronym>
        <description>A disorder characterized by significantly below average general intellectual functioning associated with impairments in adaptive behavior and manifested during the developmental period.</description>
        <dbReference type="MIM" id="611091"/>
    </disease>
    <text>The disease is caused by variants affecting the gene represented in this entry.</text>
</comment>
<comment type="similarity">
    <text evidence="2">Belongs to the class I-like SAM-binding methyltransferase superfamily. RsmB/NOP family. TRM4 subfamily.</text>
</comment>
<comment type="sequence caution" evidence="24">
    <conflict type="erroneous initiation">
        <sequence resource="EMBL-CDS" id="BAA91075"/>
    </conflict>
    <text>Truncated N-terminus.</text>
</comment>
<comment type="sequence caution" evidence="24">
    <conflict type="erroneous initiation">
        <sequence resource="EMBL-CDS" id="BAB14762"/>
    </conflict>
    <text>Truncated N-terminus.</text>
</comment>
<dbReference type="EC" id="2.1.1.-" evidence="4 8 14 16 18 13 19"/>
<dbReference type="EC" id="2.1.1.203" evidence="4"/>
<dbReference type="EMBL" id="AB255451">
    <property type="protein sequence ID" value="BAF34150.1"/>
    <property type="molecule type" value="mRNA"/>
</dbReference>
<dbReference type="EMBL" id="AK000310">
    <property type="protein sequence ID" value="BAA91075.1"/>
    <property type="status" value="ALT_INIT"/>
    <property type="molecule type" value="mRNA"/>
</dbReference>
<dbReference type="EMBL" id="AK023994">
    <property type="protein sequence ID" value="BAB14762.1"/>
    <property type="status" value="ALT_INIT"/>
    <property type="molecule type" value="mRNA"/>
</dbReference>
<dbReference type="EMBL" id="AK055456">
    <property type="protein sequence ID" value="BAG51521.1"/>
    <property type="molecule type" value="mRNA"/>
</dbReference>
<dbReference type="EMBL" id="AK291144">
    <property type="protein sequence ID" value="BAF83833.1"/>
    <property type="molecule type" value="mRNA"/>
</dbReference>
<dbReference type="EMBL" id="AK298980">
    <property type="protein sequence ID" value="BAG61074.1"/>
    <property type="molecule type" value="mRNA"/>
</dbReference>
<dbReference type="EMBL" id="AC010366">
    <property type="status" value="NOT_ANNOTATED_CDS"/>
    <property type="molecule type" value="Genomic_DNA"/>
</dbReference>
<dbReference type="EMBL" id="AC027334">
    <property type="status" value="NOT_ANNOTATED_CDS"/>
    <property type="molecule type" value="Genomic_DNA"/>
</dbReference>
<dbReference type="EMBL" id="CH471102">
    <property type="protein sequence ID" value="EAX08105.1"/>
    <property type="molecule type" value="Genomic_DNA"/>
</dbReference>
<dbReference type="EMBL" id="CH471102">
    <property type="protein sequence ID" value="EAX08106.1"/>
    <property type="molecule type" value="Genomic_DNA"/>
</dbReference>
<dbReference type="EMBL" id="BC001041">
    <property type="protein sequence ID" value="AAH01041.3"/>
    <property type="molecule type" value="mRNA"/>
</dbReference>
<dbReference type="EMBL" id="BC137083">
    <property type="protein sequence ID" value="AAI37084.1"/>
    <property type="molecule type" value="mRNA"/>
</dbReference>
<dbReference type="CCDS" id="CCDS3869.1">
    <molecule id="Q08J23-1"/>
</dbReference>
<dbReference type="CCDS" id="CCDS54832.1">
    <molecule id="Q08J23-2"/>
</dbReference>
<dbReference type="RefSeq" id="NP_001180384.1">
    <molecule id="Q08J23-2"/>
    <property type="nucleotide sequence ID" value="NM_001193455.2"/>
</dbReference>
<dbReference type="RefSeq" id="NP_060225.4">
    <molecule id="Q08J23-1"/>
    <property type="nucleotide sequence ID" value="NM_017755.5"/>
</dbReference>
<dbReference type="SMR" id="Q08J23"/>
<dbReference type="BioGRID" id="120236">
    <property type="interactions" value="300"/>
</dbReference>
<dbReference type="DIP" id="DIP-52456N"/>
<dbReference type="FunCoup" id="Q08J23">
    <property type="interactions" value="4752"/>
</dbReference>
<dbReference type="IntAct" id="Q08J23">
    <property type="interactions" value="286"/>
</dbReference>
<dbReference type="MINT" id="Q08J23"/>
<dbReference type="STRING" id="9606.ENSP00000264670"/>
<dbReference type="ChEMBL" id="CHEMBL4739683"/>
<dbReference type="GlyConnect" id="1859">
    <property type="glycosylation" value="1 N-Linked glycan (1 site)"/>
</dbReference>
<dbReference type="GlyCosmos" id="Q08J23">
    <property type="glycosylation" value="1 site, 1 glycan"/>
</dbReference>
<dbReference type="GlyGen" id="Q08J23">
    <property type="glycosylation" value="3 sites, 2 N-linked glycans (2 sites), 1 O-linked glycan (1 site)"/>
</dbReference>
<dbReference type="iPTMnet" id="Q08J23"/>
<dbReference type="MetOSite" id="Q08J23"/>
<dbReference type="PhosphoSitePlus" id="Q08J23"/>
<dbReference type="SwissPalm" id="Q08J23"/>
<dbReference type="BioMuta" id="NSUN2"/>
<dbReference type="DMDM" id="148887180"/>
<dbReference type="CPTAC" id="CPTAC-984"/>
<dbReference type="jPOST" id="Q08J23"/>
<dbReference type="MassIVE" id="Q08J23"/>
<dbReference type="PaxDb" id="9606-ENSP00000264670"/>
<dbReference type="PeptideAtlas" id="Q08J23"/>
<dbReference type="ProteomicsDB" id="32415"/>
<dbReference type="ProteomicsDB" id="58697">
    <molecule id="Q08J23-1"/>
</dbReference>
<dbReference type="ProteomicsDB" id="58698">
    <molecule id="Q08J23-2"/>
</dbReference>
<dbReference type="Pumba" id="Q08J23"/>
<dbReference type="Antibodypedia" id="22399">
    <property type="antibodies" value="179 antibodies from 28 providers"/>
</dbReference>
<dbReference type="DNASU" id="54888"/>
<dbReference type="Ensembl" id="ENST00000264670.11">
    <molecule id="Q08J23-1"/>
    <property type="protein sequence ID" value="ENSP00000264670.6"/>
    <property type="gene ID" value="ENSG00000037474.15"/>
</dbReference>
<dbReference type="Ensembl" id="ENST00000506139.5">
    <molecule id="Q08J23-2"/>
    <property type="protein sequence ID" value="ENSP00000420957.1"/>
    <property type="gene ID" value="ENSG00000037474.15"/>
</dbReference>
<dbReference type="GeneID" id="54888"/>
<dbReference type="KEGG" id="hsa:54888"/>
<dbReference type="MANE-Select" id="ENST00000264670.11">
    <property type="protein sequence ID" value="ENSP00000264670.6"/>
    <property type="RefSeq nucleotide sequence ID" value="NM_017755.6"/>
    <property type="RefSeq protein sequence ID" value="NP_060225.4"/>
</dbReference>
<dbReference type="UCSC" id="uc003jdu.4">
    <molecule id="Q08J23-1"/>
    <property type="organism name" value="human"/>
</dbReference>
<dbReference type="AGR" id="HGNC:25994"/>
<dbReference type="CTD" id="54888"/>
<dbReference type="DisGeNET" id="54888"/>
<dbReference type="GeneCards" id="NSUN2"/>
<dbReference type="HGNC" id="HGNC:25994">
    <property type="gene designation" value="NSUN2"/>
</dbReference>
<dbReference type="HPA" id="ENSG00000037474">
    <property type="expression patterns" value="Low tissue specificity"/>
</dbReference>
<dbReference type="MalaCards" id="NSUN2"/>
<dbReference type="MIM" id="610916">
    <property type="type" value="gene"/>
</dbReference>
<dbReference type="MIM" id="611091">
    <property type="type" value="phenotype"/>
</dbReference>
<dbReference type="neXtProt" id="NX_Q08J23"/>
<dbReference type="OpenTargets" id="ENSG00000037474"/>
<dbReference type="Orphanet" id="88616">
    <property type="disease" value="Autosomal recessive non-syndromic intellectual disability"/>
</dbReference>
<dbReference type="Orphanet" id="235">
    <property type="disease" value="Dubowitz syndrome"/>
</dbReference>
<dbReference type="PharmGKB" id="PA134953940"/>
<dbReference type="VEuPathDB" id="HostDB:ENSG00000037474"/>
<dbReference type="eggNOG" id="KOG2198">
    <property type="taxonomic scope" value="Eukaryota"/>
</dbReference>
<dbReference type="GeneTree" id="ENSGT00940000153665"/>
<dbReference type="HOGENOM" id="CLU_005316_4_3_1"/>
<dbReference type="InParanoid" id="Q08J23"/>
<dbReference type="OMA" id="QLFTEYV"/>
<dbReference type="OrthoDB" id="6093671at2759"/>
<dbReference type="PAN-GO" id="Q08J23">
    <property type="GO annotations" value="5 GO annotations based on evolutionary models"/>
</dbReference>
<dbReference type="PhylomeDB" id="Q08J23"/>
<dbReference type="TreeFam" id="TF300702"/>
<dbReference type="BioCyc" id="MetaCyc:HS12087-MONOMER"/>
<dbReference type="BRENDA" id="2.1.1.202">
    <property type="organism ID" value="2681"/>
</dbReference>
<dbReference type="BRENDA" id="2.1.1.203">
    <property type="organism ID" value="2681"/>
</dbReference>
<dbReference type="PathwayCommons" id="Q08J23"/>
<dbReference type="Reactome" id="R-HSA-6782315">
    <property type="pathway name" value="tRNA modification in the nucleus and cytosol"/>
</dbReference>
<dbReference type="SignaLink" id="Q08J23"/>
<dbReference type="SIGNOR" id="Q08J23"/>
<dbReference type="BioGRID-ORCS" id="54888">
    <property type="hits" value="20 hits in 1165 CRISPR screens"/>
</dbReference>
<dbReference type="CD-CODE" id="DEE660B4">
    <property type="entry name" value="Stress granule"/>
</dbReference>
<dbReference type="ChiTaRS" id="NSUN2">
    <property type="organism name" value="human"/>
</dbReference>
<dbReference type="GeneWiki" id="NSUN2"/>
<dbReference type="GenomeRNAi" id="54888"/>
<dbReference type="Pharos" id="Q08J23">
    <property type="development level" value="Tbio"/>
</dbReference>
<dbReference type="PRO" id="PR:Q08J23"/>
<dbReference type="Proteomes" id="UP000005640">
    <property type="component" value="Chromosome 5"/>
</dbReference>
<dbReference type="RNAct" id="Q08J23">
    <property type="molecule type" value="protein"/>
</dbReference>
<dbReference type="Bgee" id="ENSG00000037474">
    <property type="expression patterns" value="Expressed in upper arm skin and 183 other cell types or tissues"/>
</dbReference>
<dbReference type="ExpressionAtlas" id="Q08J23">
    <property type="expression patterns" value="baseline and differential"/>
</dbReference>
<dbReference type="GO" id="GO:0033391">
    <property type="term" value="C:chromatoid body"/>
    <property type="evidence" value="ECO:0007669"/>
    <property type="project" value="Ensembl"/>
</dbReference>
<dbReference type="GO" id="GO:0005737">
    <property type="term" value="C:cytoplasm"/>
    <property type="evidence" value="ECO:0000314"/>
    <property type="project" value="UniProtKB"/>
</dbReference>
<dbReference type="GO" id="GO:0070062">
    <property type="term" value="C:extracellular exosome"/>
    <property type="evidence" value="ECO:0000314"/>
    <property type="project" value="UniProtKB"/>
</dbReference>
<dbReference type="GO" id="GO:0005739">
    <property type="term" value="C:mitochondrion"/>
    <property type="evidence" value="ECO:0000314"/>
    <property type="project" value="UniProtKB"/>
</dbReference>
<dbReference type="GO" id="GO:0005730">
    <property type="term" value="C:nucleolus"/>
    <property type="evidence" value="ECO:0000314"/>
    <property type="project" value="UniProtKB"/>
</dbReference>
<dbReference type="GO" id="GO:0005654">
    <property type="term" value="C:nucleoplasm"/>
    <property type="evidence" value="ECO:0000304"/>
    <property type="project" value="Reactome"/>
</dbReference>
<dbReference type="GO" id="GO:0005634">
    <property type="term" value="C:nucleus"/>
    <property type="evidence" value="ECO:0000318"/>
    <property type="project" value="GO_Central"/>
</dbReference>
<dbReference type="GO" id="GO:0005819">
    <property type="term" value="C:spindle"/>
    <property type="evidence" value="ECO:0007669"/>
    <property type="project" value="UniProtKB-SubCell"/>
</dbReference>
<dbReference type="GO" id="GO:0062152">
    <property type="term" value="F:mRNA (cytidine-5-)-methyltransferase activity"/>
    <property type="evidence" value="ECO:0000314"/>
    <property type="project" value="UniProtKB"/>
</dbReference>
<dbReference type="GO" id="GO:0003723">
    <property type="term" value="F:RNA binding"/>
    <property type="evidence" value="ECO:0007005"/>
    <property type="project" value="UniProtKB"/>
</dbReference>
<dbReference type="GO" id="GO:0016428">
    <property type="term" value="F:tRNA (cytidine-5-)-methyltransferase activity"/>
    <property type="evidence" value="ECO:0000314"/>
    <property type="project" value="UniProtKB"/>
</dbReference>
<dbReference type="GO" id="GO:0000049">
    <property type="term" value="F:tRNA binding"/>
    <property type="evidence" value="ECO:0000318"/>
    <property type="project" value="GO_Central"/>
</dbReference>
<dbReference type="GO" id="GO:0051301">
    <property type="term" value="P:cell division"/>
    <property type="evidence" value="ECO:0007669"/>
    <property type="project" value="UniProtKB-KW"/>
</dbReference>
<dbReference type="GO" id="GO:0048820">
    <property type="term" value="P:hair follicle maturation"/>
    <property type="evidence" value="ECO:0000250"/>
    <property type="project" value="UniProtKB"/>
</dbReference>
<dbReference type="GO" id="GO:0001701">
    <property type="term" value="P:in utero embryonic development"/>
    <property type="evidence" value="ECO:0007669"/>
    <property type="project" value="Ensembl"/>
</dbReference>
<dbReference type="GO" id="GO:0033313">
    <property type="term" value="P:meiotic cell cycle checkpoint signaling"/>
    <property type="evidence" value="ECO:0007669"/>
    <property type="project" value="Ensembl"/>
</dbReference>
<dbReference type="GO" id="GO:0006397">
    <property type="term" value="P:mRNA processing"/>
    <property type="evidence" value="ECO:0000314"/>
    <property type="project" value="UniProtKB"/>
</dbReference>
<dbReference type="GO" id="GO:0010793">
    <property type="term" value="P:regulation of mRNA export from nucleus"/>
    <property type="evidence" value="ECO:0000314"/>
    <property type="project" value="UniProtKB"/>
</dbReference>
<dbReference type="GO" id="GO:2000736">
    <property type="term" value="P:regulation of stem cell differentiation"/>
    <property type="evidence" value="ECO:0000250"/>
    <property type="project" value="UniProtKB"/>
</dbReference>
<dbReference type="GO" id="GO:0007286">
    <property type="term" value="P:spermatid development"/>
    <property type="evidence" value="ECO:0007669"/>
    <property type="project" value="Ensembl"/>
</dbReference>
<dbReference type="GO" id="GO:0030488">
    <property type="term" value="P:tRNA methylation"/>
    <property type="evidence" value="ECO:0000314"/>
    <property type="project" value="UniProtKB"/>
</dbReference>
<dbReference type="GO" id="GO:0006400">
    <property type="term" value="P:tRNA modification"/>
    <property type="evidence" value="ECO:0000304"/>
    <property type="project" value="Reactome"/>
</dbReference>
<dbReference type="GO" id="GO:0036416">
    <property type="term" value="P:tRNA stabilization"/>
    <property type="evidence" value="ECO:0000250"/>
    <property type="project" value="UniProtKB"/>
</dbReference>
<dbReference type="Gene3D" id="3.40.50.150">
    <property type="entry name" value="Vaccinia Virus protein VP39"/>
    <property type="match status" value="1"/>
</dbReference>
<dbReference type="InterPro" id="IPR049560">
    <property type="entry name" value="MeTrfase_RsmB-F_NOP2_cat"/>
</dbReference>
<dbReference type="InterPro" id="IPR001678">
    <property type="entry name" value="MeTrfase_RsmB-F_NOP2_dom"/>
</dbReference>
<dbReference type="InterPro" id="IPR023267">
    <property type="entry name" value="RCMT"/>
</dbReference>
<dbReference type="InterPro" id="IPR023270">
    <property type="entry name" value="RCMT_NCL1"/>
</dbReference>
<dbReference type="InterPro" id="IPR029063">
    <property type="entry name" value="SAM-dependent_MTases_sf"/>
</dbReference>
<dbReference type="PANTHER" id="PTHR22808">
    <property type="entry name" value="NCL1 YEAST -RELATED NOL1/NOP2/FMU SUN DOMAIN-CONTAINING"/>
    <property type="match status" value="1"/>
</dbReference>
<dbReference type="PANTHER" id="PTHR22808:SF20">
    <property type="entry name" value="RNA CYTOSINE C(5)-METHYLTRANSFERASE NSUN2"/>
    <property type="match status" value="1"/>
</dbReference>
<dbReference type="Pfam" id="PF01189">
    <property type="entry name" value="Methyltr_RsmB-F"/>
    <property type="match status" value="1"/>
</dbReference>
<dbReference type="Pfam" id="PF25376">
    <property type="entry name" value="Pre-PUA_NSUN2"/>
    <property type="match status" value="1"/>
</dbReference>
<dbReference type="Pfam" id="PF25378">
    <property type="entry name" value="PUA_NSUN2"/>
    <property type="match status" value="1"/>
</dbReference>
<dbReference type="PRINTS" id="PR02008">
    <property type="entry name" value="RCMTFAMILY"/>
</dbReference>
<dbReference type="PRINTS" id="PR02011">
    <property type="entry name" value="RCMTNCL1"/>
</dbReference>
<dbReference type="SUPFAM" id="SSF53335">
    <property type="entry name" value="S-adenosyl-L-methionine-dependent methyltransferases"/>
    <property type="match status" value="1"/>
</dbReference>
<dbReference type="PROSITE" id="PS51686">
    <property type="entry name" value="SAM_MT_RSMB_NOP"/>
    <property type="match status" value="1"/>
</dbReference>
<feature type="chain" id="PRO_0000289223" description="RNA cytosine C(5)-methyltransferase NSUN2">
    <location>
        <begin position="1"/>
        <end position="767"/>
    </location>
</feature>
<feature type="region of interest" description="Disordered" evidence="3">
    <location>
        <begin position="1"/>
        <end position="36"/>
    </location>
</feature>
<feature type="region of interest" description="Disordered" evidence="3">
    <location>
        <begin position="436"/>
        <end position="481"/>
    </location>
</feature>
<feature type="region of interest" description="Disordered" evidence="3">
    <location>
        <begin position="719"/>
        <end position="767"/>
    </location>
</feature>
<feature type="compositionally biased region" description="Basic and acidic residues" evidence="3">
    <location>
        <begin position="461"/>
        <end position="470"/>
    </location>
</feature>
<feature type="compositionally biased region" description="Polar residues" evidence="3">
    <location>
        <begin position="719"/>
        <end position="730"/>
    </location>
</feature>
<feature type="active site" description="Nucleophile" evidence="2 25 26">
    <location>
        <position position="321"/>
    </location>
</feature>
<feature type="binding site" evidence="2">
    <location>
        <begin position="184"/>
        <end position="190"/>
    </location>
    <ligand>
        <name>S-adenosyl-L-methionine</name>
        <dbReference type="ChEBI" id="CHEBI:59789"/>
    </ligand>
</feature>
<feature type="binding site" evidence="2">
    <location>
        <position position="215"/>
    </location>
    <ligand>
        <name>S-adenosyl-L-methionine</name>
        <dbReference type="ChEBI" id="CHEBI:59789"/>
    </ligand>
</feature>
<feature type="binding site" evidence="2">
    <location>
        <position position="242"/>
    </location>
    <ligand>
        <name>S-adenosyl-L-methionine</name>
        <dbReference type="ChEBI" id="CHEBI:59789"/>
    </ligand>
</feature>
<feature type="binding site" evidence="2">
    <location>
        <position position="268"/>
    </location>
    <ligand>
        <name>S-adenosyl-L-methionine</name>
        <dbReference type="ChEBI" id="CHEBI:59789"/>
    </ligand>
</feature>
<feature type="modified residue" description="Phosphoserine; by AURKB" evidence="5">
    <location>
        <position position="139"/>
    </location>
</feature>
<feature type="modified residue" description="Phosphoserine" evidence="31 33 35 36">
    <location>
        <position position="456"/>
    </location>
</feature>
<feature type="modified residue" description="Phosphoserine" evidence="31 34">
    <location>
        <position position="473"/>
    </location>
</feature>
<feature type="modified residue" description="N6-acetyllysine; alternate" evidence="1">
    <location>
        <position position="586"/>
    </location>
</feature>
<feature type="modified residue" description="N6-malonyllysine; alternate" evidence="7">
    <location>
        <position position="586"/>
    </location>
</feature>
<feature type="modified residue" description="Phosphoserine" evidence="33 34 35">
    <location>
        <position position="593"/>
    </location>
</feature>
<feature type="modified residue" description="Phosphothreonine" evidence="1">
    <location>
        <position position="718"/>
    </location>
</feature>
<feature type="modified residue" description="Phosphoserine" evidence="1">
    <location>
        <position position="724"/>
    </location>
</feature>
<feature type="modified residue" description="Phosphoserine" evidence="28 29 30 31 32 33 35 36">
    <location>
        <position position="743"/>
    </location>
</feature>
<feature type="modified residue" description="Phosphoserine" evidence="28 29 30 31 32 35 36">
    <location>
        <position position="751"/>
    </location>
</feature>
<feature type="cross-link" description="Glycyl lysine isopeptide (Lys-Gly) (interchain with G-Cter in SUMO2)" evidence="38">
    <location>
        <position position="46"/>
    </location>
</feature>
<feature type="cross-link" description="Glycyl lysine isopeptide (Lys-Gly) (interchain with G-Cter in SUMO2)" evidence="38">
    <location>
        <position position="464"/>
    </location>
</feature>
<feature type="cross-link" description="Glycyl lysine isopeptide (Lys-Gly) (interchain with G-Cter in SUMO2)" evidence="38">
    <location>
        <position position="470"/>
    </location>
</feature>
<feature type="cross-link" description="Glycyl lysine isopeptide (Lys-Gly) (interchain with G-Cter in SUMO2)" evidence="38">
    <location>
        <position position="511"/>
    </location>
</feature>
<feature type="cross-link" description="Glycyl lysine isopeptide (Lys-Gly) (interchain with G-Cter in SUMO2)" evidence="38">
    <location>
        <position position="516"/>
    </location>
</feature>
<feature type="cross-link" description="Glycyl lysine isopeptide (Lys-Gly) (interchain with G-Cter in SUMO2); alternate" evidence="38">
    <location>
        <position position="586"/>
    </location>
</feature>
<feature type="cross-link" description="Glycyl lysine isopeptide (Lys-Gly) (interchain with G-Cter in SUMO2)" evidence="37">
    <location>
        <position position="640"/>
    </location>
</feature>
<feature type="cross-link" description="Glycyl lysine isopeptide (Lys-Gly) (interchain with G-Cter in SUMO2)" evidence="38">
    <location>
        <position position="654"/>
    </location>
</feature>
<feature type="cross-link" description="Glycyl lysine isopeptide (Lys-Gly) (interchain with G-Cter in SUMO2)" evidence="38">
    <location>
        <position position="660"/>
    </location>
</feature>
<feature type="splice variant" id="VSP_053598" description="In isoform 3." evidence="20">
    <location>
        <begin position="1"/>
        <end position="236"/>
    </location>
</feature>
<feature type="splice variant" id="VSP_042621" description="In isoform 2." evidence="20">
    <original>SHAKEILHCLKNKYFKELEDLEVDGQKVEVPQPLSW</original>
    <variation>R</variation>
    <location>
        <begin position="85"/>
        <end position="120"/>
    </location>
</feature>
<feature type="sequence variant" id="VAR_032604" description="In dbSNP:rs2303708.">
    <original>V</original>
    <variation>I</variation>
    <location>
        <position position="627"/>
    </location>
</feature>
<feature type="sequence variant" id="VAR_068530" description="In MRT5; impairs proper intracellular localization; dbSNP:rs587776908." evidence="10">
    <original>G</original>
    <variation>R</variation>
    <location>
        <position position="679"/>
    </location>
</feature>
<feature type="mutagenesis site" description="Induces a constitutive association with NPM1." evidence="5">
    <original>S</original>
    <variation>A</variation>
    <location>
        <position position="139"/>
    </location>
</feature>
<feature type="mutagenesis site" description="Mimicks constitutive phosphorylation and abolishes methyltransferase activity." evidence="5">
    <original>S</original>
    <variation>E</variation>
    <location>
        <position position="139"/>
    </location>
</feature>
<feature type="mutagenesis site" description="Loss of RNA methyltransferase activity." evidence="14 15">
    <original>K</original>
    <variation>M</variation>
    <location>
        <position position="190"/>
    </location>
</feature>
<feature type="mutagenesis site" description="Abolished mRNA methyltransferase activity; when associated with A-321." evidence="13 18">
    <original>C</original>
    <variation>A</variation>
    <location>
        <position position="271"/>
    </location>
</feature>
<feature type="mutagenesis site" description="Abolished mRNA methyltransferase activity; when associated with A-271." evidence="13 18">
    <original>C</original>
    <variation>A</variation>
    <location>
        <position position="321"/>
    </location>
</feature>
<feature type="sequence conflict" description="In Ref. 2; BAA91075." evidence="24" ref="2">
    <original>M</original>
    <variation>V</variation>
    <location>
        <position position="316"/>
    </location>
</feature>
<feature type="sequence conflict" description="In Ref. 2; BAF83833." evidence="24" ref="2">
    <original>E</original>
    <variation>G</variation>
    <location>
        <position position="327"/>
    </location>
</feature>
<feature type="sequence conflict" description="In Ref. 2; BAG51521." evidence="24" ref="2">
    <original>I</original>
    <variation>V</variation>
    <location>
        <position position="484"/>
    </location>
</feature>
<feature type="sequence conflict" description="In Ref. 2; BAB14762." evidence="24" ref="2">
    <original>G</original>
    <variation>D</variation>
    <location>
        <position position="594"/>
    </location>
</feature>
<feature type="sequence conflict" description="In Ref. 1; BAF34150." evidence="24" ref="1">
    <original>Q</original>
    <variation>R</variation>
    <location>
        <position position="605"/>
    </location>
</feature>
<accession>Q08J23</accession>
<accession>A8K529</accession>
<accession>B2RNR4</accession>
<accession>B3KP09</accession>
<accession>B4DQW2</accession>
<accession>G3V1R4</accession>
<accession>Q9BVN4</accession>
<accession>Q9H858</accession>
<accession>Q9NXD9</accession>
<protein>
    <recommendedName>
        <fullName evidence="24">RNA cytosine C(5)-methyltransferase NSUN2</fullName>
        <ecNumber evidence="4 8 14 16 18">2.1.1.-</ecNumber>
    </recommendedName>
    <alternativeName>
        <fullName evidence="23">Myc-induced SUN domain-containing protein</fullName>
        <shortName evidence="23">Misu</shortName>
    </alternativeName>
    <alternativeName>
        <fullName evidence="22">NOL1/NOP2/Sun domain family member 2</fullName>
    </alternativeName>
    <alternativeName>
        <fullName evidence="22">Substrate of AIM1/Aurora kinase B</fullName>
    </alternativeName>
    <alternativeName>
        <fullName>mRNA cytosine C(5)-methyltransferase</fullName>
        <ecNumber evidence="8 13 18 19">2.1.1.-</ecNumber>
    </alternativeName>
    <alternativeName>
        <fullName>tRNA cytosine C(5)-methyltransferase</fullName>
        <ecNumber evidence="16">2.1.1.-</ecNumber>
        <ecNumber evidence="4">2.1.1.203</ecNumber>
    </alternativeName>
    <alternativeName>
        <fullName evidence="21">tRNA methyltransferase 4 homolog</fullName>
        <shortName evidence="21">hTrm4</shortName>
    </alternativeName>
</protein>
<sequence length="767" mass="86471">MGRRSRGRRLQQQQRPEDAEDGAEGGGKRGEAGWEGGYPEIVKENKLFEHYYQELKIVPEGEWGQFMDALREPLPATLRITGYKSHAKEILHCLKNKYFKELEDLEVDGQKVEVPQPLSWYPEELAWHTNLSRKILRKSPHLEKFHQFLVSETESGNISRQEAVSMIPPLLLNVRPHHKILDMCAAPGSKTTQLIEMLHADMNVPFPEGFVIANDVDNKRCYLLVHQAKRLSSPCIMVVNHDASSIPRLQIDVDGRKEILFYDRILCDVPCSGDGTMRKNIDVWKKWTTLNSLQLHGLQLRIATRGAEQLAEGGRMVYSTCSLNPIEDEAVIASLLEKSEGALELADVSNELPGLKWMPGITQWKVMTKDGQWFTDWDAVPHSRHTQIRPTMFPPKDPEKLQAMHLERCLRILPHHQNTGGFFVAVLVKKSSMPWNKRQPKLQGKSAETRESTQLSPADLTEGKPTDPSKLESPSFTGTGDTEIAHATEDLENNGSKKDGVCGPPPSKKMKLFGFKEDPFVFIPEDDPLFPPIEKFYALDPSFPRMNLLTRTTEGKKRQLYMVSKELRNVLLNNSEKMKVINTGIKVWCRNNSGEEFDCAFRLAQEGIYTLYPFINSRIITVSMEDVKILLTQENPFFRKLSSETYSQAKDLAKGSIVLKYEPDSANPDALQCPIVLCGWRGKASIRTFVPKNERLHYLRMMGLEVLGEKKKEGVILTNESAASTGQPDNDVTEGQRAGEPNSPDAEEANSPDVTAGCDPAGVHPPR</sequence>
<proteinExistence type="evidence at protein level"/>
<organism>
    <name type="scientific">Homo sapiens</name>
    <name type="common">Human</name>
    <dbReference type="NCBI Taxonomy" id="9606"/>
    <lineage>
        <taxon>Eukaryota</taxon>
        <taxon>Metazoa</taxon>
        <taxon>Chordata</taxon>
        <taxon>Craniata</taxon>
        <taxon>Vertebrata</taxon>
        <taxon>Euteleostomi</taxon>
        <taxon>Mammalia</taxon>
        <taxon>Eutheria</taxon>
        <taxon>Euarchontoglires</taxon>
        <taxon>Primates</taxon>
        <taxon>Haplorrhini</taxon>
        <taxon>Catarrhini</taxon>
        <taxon>Hominidae</taxon>
        <taxon>Homo</taxon>
    </lineage>
</organism>
<reference key="1">
    <citation type="journal article" date="2007" name="Mol. Biol. Cell">
        <title>Aurora-B regulates RNA methyltransferase NSUN2.</title>
        <authorList>
            <person name="Sakita-Suto S."/>
            <person name="Kanda A."/>
            <person name="Suzuki F."/>
            <person name="Sato S."/>
            <person name="Takata T."/>
            <person name="Tatsuka M."/>
        </authorList>
    </citation>
    <scope>NUCLEOTIDE SEQUENCE [MRNA] (ISOFORM 1)</scope>
    <scope>PARTIAL PROTEIN SEQUENCE</scope>
    <scope>SUBCELLULAR LOCATION</scope>
    <scope>PHOSPHORYLATION AT SER-139</scope>
    <scope>INTERACTION WITH NPM1 AND NCL</scope>
    <scope>MUTAGENESIS OF SER-139</scope>
</reference>
<reference key="2">
    <citation type="journal article" date="2004" name="Nat. Genet.">
        <title>Complete sequencing and characterization of 21,243 full-length human cDNAs.</title>
        <authorList>
            <person name="Ota T."/>
            <person name="Suzuki Y."/>
            <person name="Nishikawa T."/>
            <person name="Otsuki T."/>
            <person name="Sugiyama T."/>
            <person name="Irie R."/>
            <person name="Wakamatsu A."/>
            <person name="Hayashi K."/>
            <person name="Sato H."/>
            <person name="Nagai K."/>
            <person name="Kimura K."/>
            <person name="Makita H."/>
            <person name="Sekine M."/>
            <person name="Obayashi M."/>
            <person name="Nishi T."/>
            <person name="Shibahara T."/>
            <person name="Tanaka T."/>
            <person name="Ishii S."/>
            <person name="Yamamoto J."/>
            <person name="Saito K."/>
            <person name="Kawai Y."/>
            <person name="Isono Y."/>
            <person name="Nakamura Y."/>
            <person name="Nagahari K."/>
            <person name="Murakami K."/>
            <person name="Yasuda T."/>
            <person name="Iwayanagi T."/>
            <person name="Wagatsuma M."/>
            <person name="Shiratori A."/>
            <person name="Sudo H."/>
            <person name="Hosoiri T."/>
            <person name="Kaku Y."/>
            <person name="Kodaira H."/>
            <person name="Kondo H."/>
            <person name="Sugawara M."/>
            <person name="Takahashi M."/>
            <person name="Kanda K."/>
            <person name="Yokoi T."/>
            <person name="Furuya T."/>
            <person name="Kikkawa E."/>
            <person name="Omura Y."/>
            <person name="Abe K."/>
            <person name="Kamihara K."/>
            <person name="Katsuta N."/>
            <person name="Sato K."/>
            <person name="Tanikawa M."/>
            <person name="Yamazaki M."/>
            <person name="Ninomiya K."/>
            <person name="Ishibashi T."/>
            <person name="Yamashita H."/>
            <person name="Murakawa K."/>
            <person name="Fujimori K."/>
            <person name="Tanai H."/>
            <person name="Kimata M."/>
            <person name="Watanabe M."/>
            <person name="Hiraoka S."/>
            <person name="Chiba Y."/>
            <person name="Ishida S."/>
            <person name="Ono Y."/>
            <person name="Takiguchi S."/>
            <person name="Watanabe S."/>
            <person name="Yosida M."/>
            <person name="Hotuta T."/>
            <person name="Kusano J."/>
            <person name="Kanehori K."/>
            <person name="Takahashi-Fujii A."/>
            <person name="Hara H."/>
            <person name="Tanase T.-O."/>
            <person name="Nomura Y."/>
            <person name="Togiya S."/>
            <person name="Komai F."/>
            <person name="Hara R."/>
            <person name="Takeuchi K."/>
            <person name="Arita M."/>
            <person name="Imose N."/>
            <person name="Musashino K."/>
            <person name="Yuuki H."/>
            <person name="Oshima A."/>
            <person name="Sasaki N."/>
            <person name="Aotsuka S."/>
            <person name="Yoshikawa Y."/>
            <person name="Matsunawa H."/>
            <person name="Ichihara T."/>
            <person name="Shiohata N."/>
            <person name="Sano S."/>
            <person name="Moriya S."/>
            <person name="Momiyama H."/>
            <person name="Satoh N."/>
            <person name="Takami S."/>
            <person name="Terashima Y."/>
            <person name="Suzuki O."/>
            <person name="Nakagawa S."/>
            <person name="Senoh A."/>
            <person name="Mizoguchi H."/>
            <person name="Goto Y."/>
            <person name="Shimizu F."/>
            <person name="Wakebe H."/>
            <person name="Hishigaki H."/>
            <person name="Watanabe T."/>
            <person name="Sugiyama A."/>
            <person name="Takemoto M."/>
            <person name="Kawakami B."/>
            <person name="Yamazaki M."/>
            <person name="Watanabe K."/>
            <person name="Kumagai A."/>
            <person name="Itakura S."/>
            <person name="Fukuzumi Y."/>
            <person name="Fujimori Y."/>
            <person name="Komiyama M."/>
            <person name="Tashiro H."/>
            <person name="Tanigami A."/>
            <person name="Fujiwara T."/>
            <person name="Ono T."/>
            <person name="Yamada K."/>
            <person name="Fujii Y."/>
            <person name="Ozaki K."/>
            <person name="Hirao M."/>
            <person name="Ohmori Y."/>
            <person name="Kawabata A."/>
            <person name="Hikiji T."/>
            <person name="Kobatake N."/>
            <person name="Inagaki H."/>
            <person name="Ikema Y."/>
            <person name="Okamoto S."/>
            <person name="Okitani R."/>
            <person name="Kawakami T."/>
            <person name="Noguchi S."/>
            <person name="Itoh T."/>
            <person name="Shigeta K."/>
            <person name="Senba T."/>
            <person name="Matsumura K."/>
            <person name="Nakajima Y."/>
            <person name="Mizuno T."/>
            <person name="Morinaga M."/>
            <person name="Sasaki M."/>
            <person name="Togashi T."/>
            <person name="Oyama M."/>
            <person name="Hata H."/>
            <person name="Watanabe M."/>
            <person name="Komatsu T."/>
            <person name="Mizushima-Sugano J."/>
            <person name="Satoh T."/>
            <person name="Shirai Y."/>
            <person name="Takahashi Y."/>
            <person name="Nakagawa K."/>
            <person name="Okumura K."/>
            <person name="Nagase T."/>
            <person name="Nomura N."/>
            <person name="Kikuchi H."/>
            <person name="Masuho Y."/>
            <person name="Yamashita R."/>
            <person name="Nakai K."/>
            <person name="Yada T."/>
            <person name="Nakamura Y."/>
            <person name="Ohara O."/>
            <person name="Isogai T."/>
            <person name="Sugano S."/>
        </authorList>
    </citation>
    <scope>NUCLEOTIDE SEQUENCE [LARGE SCALE MRNA] (ISOFORMS 1; 2 AND 3)</scope>
</reference>
<reference key="3">
    <citation type="journal article" date="2004" name="Nature">
        <title>The DNA sequence and comparative analysis of human chromosome 5.</title>
        <authorList>
            <person name="Schmutz J."/>
            <person name="Martin J."/>
            <person name="Terry A."/>
            <person name="Couronne O."/>
            <person name="Grimwood J."/>
            <person name="Lowry S."/>
            <person name="Gordon L.A."/>
            <person name="Scott D."/>
            <person name="Xie G."/>
            <person name="Huang W."/>
            <person name="Hellsten U."/>
            <person name="Tran-Gyamfi M."/>
            <person name="She X."/>
            <person name="Prabhakar S."/>
            <person name="Aerts A."/>
            <person name="Altherr M."/>
            <person name="Bajorek E."/>
            <person name="Black S."/>
            <person name="Branscomb E."/>
            <person name="Caoile C."/>
            <person name="Challacombe J.F."/>
            <person name="Chan Y.M."/>
            <person name="Denys M."/>
            <person name="Detter J.C."/>
            <person name="Escobar J."/>
            <person name="Flowers D."/>
            <person name="Fotopulos D."/>
            <person name="Glavina T."/>
            <person name="Gomez M."/>
            <person name="Gonzales E."/>
            <person name="Goodstein D."/>
            <person name="Grigoriev I."/>
            <person name="Groza M."/>
            <person name="Hammon N."/>
            <person name="Hawkins T."/>
            <person name="Haydu L."/>
            <person name="Israni S."/>
            <person name="Jett J."/>
            <person name="Kadner K."/>
            <person name="Kimball H."/>
            <person name="Kobayashi A."/>
            <person name="Lopez F."/>
            <person name="Lou Y."/>
            <person name="Martinez D."/>
            <person name="Medina C."/>
            <person name="Morgan J."/>
            <person name="Nandkeshwar R."/>
            <person name="Noonan J.P."/>
            <person name="Pitluck S."/>
            <person name="Pollard M."/>
            <person name="Predki P."/>
            <person name="Priest J."/>
            <person name="Ramirez L."/>
            <person name="Retterer J."/>
            <person name="Rodriguez A."/>
            <person name="Rogers S."/>
            <person name="Salamov A."/>
            <person name="Salazar A."/>
            <person name="Thayer N."/>
            <person name="Tice H."/>
            <person name="Tsai M."/>
            <person name="Ustaszewska A."/>
            <person name="Vo N."/>
            <person name="Wheeler J."/>
            <person name="Wu K."/>
            <person name="Yang J."/>
            <person name="Dickson M."/>
            <person name="Cheng J.-F."/>
            <person name="Eichler E.E."/>
            <person name="Olsen A."/>
            <person name="Pennacchio L.A."/>
            <person name="Rokhsar D.S."/>
            <person name="Richardson P."/>
            <person name="Lucas S.M."/>
            <person name="Myers R.M."/>
            <person name="Rubin E.M."/>
        </authorList>
    </citation>
    <scope>NUCLEOTIDE SEQUENCE [LARGE SCALE GENOMIC DNA]</scope>
</reference>
<reference key="4">
    <citation type="submission" date="2005-09" db="EMBL/GenBank/DDBJ databases">
        <authorList>
            <person name="Mural R.J."/>
            <person name="Istrail S."/>
            <person name="Sutton G."/>
            <person name="Florea L."/>
            <person name="Halpern A.L."/>
            <person name="Mobarry C.M."/>
            <person name="Lippert R."/>
            <person name="Walenz B."/>
            <person name="Shatkay H."/>
            <person name="Dew I."/>
            <person name="Miller J.R."/>
            <person name="Flanigan M.J."/>
            <person name="Edwards N.J."/>
            <person name="Bolanos R."/>
            <person name="Fasulo D."/>
            <person name="Halldorsson B.V."/>
            <person name="Hannenhalli S."/>
            <person name="Turner R."/>
            <person name="Yooseph S."/>
            <person name="Lu F."/>
            <person name="Nusskern D.R."/>
            <person name="Shue B.C."/>
            <person name="Zheng X.H."/>
            <person name="Zhong F."/>
            <person name="Delcher A.L."/>
            <person name="Huson D.H."/>
            <person name="Kravitz S.A."/>
            <person name="Mouchard L."/>
            <person name="Reinert K."/>
            <person name="Remington K.A."/>
            <person name="Clark A.G."/>
            <person name="Waterman M.S."/>
            <person name="Eichler E.E."/>
            <person name="Adams M.D."/>
            <person name="Hunkapiller M.W."/>
            <person name="Myers E.W."/>
            <person name="Venter J.C."/>
        </authorList>
    </citation>
    <scope>NUCLEOTIDE SEQUENCE [LARGE SCALE GENOMIC DNA]</scope>
</reference>
<reference key="5">
    <citation type="journal article" date="2004" name="Genome Res.">
        <title>The status, quality, and expansion of the NIH full-length cDNA project: the Mammalian Gene Collection (MGC).</title>
        <authorList>
            <consortium name="The MGC Project Team"/>
        </authorList>
    </citation>
    <scope>NUCLEOTIDE SEQUENCE [LARGE SCALE MRNA] (ISOFORM 1)</scope>
    <source>
        <tissue>Lung</tissue>
        <tissue>Placenta</tissue>
    </source>
</reference>
<reference key="6">
    <citation type="journal article" date="2006" name="Cell">
        <title>Global, in vivo, and site-specific phosphorylation dynamics in signaling networks.</title>
        <authorList>
            <person name="Olsen J.V."/>
            <person name="Blagoev B."/>
            <person name="Gnad F."/>
            <person name="Macek B."/>
            <person name="Kumar C."/>
            <person name="Mortensen P."/>
            <person name="Mann M."/>
        </authorList>
    </citation>
    <scope>PHOSPHORYLATION [LARGE SCALE ANALYSIS] AT SER-743 AND SER-751</scope>
    <scope>IDENTIFICATION BY MASS SPECTROMETRY [LARGE SCALE ANALYSIS]</scope>
    <source>
        <tissue>Cervix carcinoma</tissue>
    </source>
</reference>
<reference key="7">
    <citation type="journal article" date="2006" name="Nat. Biotechnol.">
        <title>A probability-based approach for high-throughput protein phosphorylation analysis and site localization.</title>
        <authorList>
            <person name="Beausoleil S.A."/>
            <person name="Villen J."/>
            <person name="Gerber S.A."/>
            <person name="Rush J."/>
            <person name="Gygi S.P."/>
        </authorList>
    </citation>
    <scope>PHOSPHORYLATION [LARGE SCALE ANALYSIS] AT SER-743 AND SER-751</scope>
    <scope>IDENTIFICATION BY MASS SPECTROMETRY [LARGE SCALE ANALYSIS]</scope>
    <source>
        <tissue>Cervix carcinoma</tissue>
    </source>
</reference>
<reference key="8">
    <citation type="journal article" date="2006" name="Nucleic Acids Res.">
        <title>Identification of human tRNA:m5C methyltransferase catalysing intron-dependent m5C formation in the first position of the anticodon of the pre-tRNA Leu (CAA).</title>
        <authorList>
            <person name="Brzezicha B."/>
            <person name="Schmidt M."/>
            <person name="Makalowska I."/>
            <person name="Jarmolowski A."/>
            <person name="Pienkowska J."/>
            <person name="Szweykowska-Kulinska Z."/>
        </authorList>
    </citation>
    <scope>FUNCTION</scope>
    <scope>SUBCELLULAR LOCATION</scope>
    <scope>CATALYTIC ACTIVITY</scope>
</reference>
<reference key="9">
    <citation type="journal article" date="2008" name="J. Proteome Res.">
        <title>Combining protein-based IMAC, peptide-based IMAC, and MudPIT for efficient phosphoproteomic analysis.</title>
        <authorList>
            <person name="Cantin G.T."/>
            <person name="Yi W."/>
            <person name="Lu B."/>
            <person name="Park S.K."/>
            <person name="Xu T."/>
            <person name="Lee J.-D."/>
            <person name="Yates J.R. III"/>
        </authorList>
    </citation>
    <scope>PHOSPHORYLATION [LARGE SCALE ANALYSIS] AT SER-743 AND SER-751</scope>
    <scope>IDENTIFICATION BY MASS SPECTROMETRY [LARGE SCALE ANALYSIS]</scope>
    <source>
        <tissue>Cervix carcinoma</tissue>
    </source>
</reference>
<reference key="10">
    <citation type="journal article" date="2008" name="Proc. Natl. Acad. Sci. U.S.A.">
        <title>A quantitative atlas of mitotic phosphorylation.</title>
        <authorList>
            <person name="Dephoure N."/>
            <person name="Zhou C."/>
            <person name="Villen J."/>
            <person name="Beausoleil S.A."/>
            <person name="Bakalarski C.E."/>
            <person name="Elledge S.J."/>
            <person name="Gygi S.P."/>
        </authorList>
    </citation>
    <scope>PHOSPHORYLATION [LARGE SCALE ANALYSIS] AT SER-456; SER-473; SER-743 AND SER-751</scope>
    <scope>IDENTIFICATION BY MASS SPECTROMETRY [LARGE SCALE ANALYSIS]</scope>
    <source>
        <tissue>Cervix carcinoma</tissue>
    </source>
</reference>
<reference key="11">
    <citation type="journal article" date="2009" name="Anal. Chem.">
        <title>Lys-N and trypsin cover complementary parts of the phosphoproteome in a refined SCX-based approach.</title>
        <authorList>
            <person name="Gauci S."/>
            <person name="Helbig A.O."/>
            <person name="Slijper M."/>
            <person name="Krijgsveld J."/>
            <person name="Heck A.J."/>
            <person name="Mohammed S."/>
        </authorList>
    </citation>
    <scope>IDENTIFICATION BY MASS SPECTROMETRY [LARGE SCALE ANALYSIS]</scope>
</reference>
<reference key="12">
    <citation type="journal article" date="2009" name="J. Cell Biol.">
        <title>The nucleolar RNA methyltransferase Misu (NSun2) is required for mitotic spindle stability.</title>
        <authorList>
            <person name="Hussain S."/>
            <person name="Benavente S.B."/>
            <person name="Nascimento E."/>
            <person name="Dragoni I."/>
            <person name="Kurowski A."/>
            <person name="Gillich A."/>
            <person name="Humphreys P."/>
            <person name="Frye M."/>
        </authorList>
    </citation>
    <scope>FUNCTION</scope>
    <scope>SUBCELLULAR LOCATION</scope>
</reference>
<reference key="13">
    <citation type="journal article" date="2009" name="Sci. Signal.">
        <title>Quantitative phosphoproteomic analysis of T cell receptor signaling reveals system-wide modulation of protein-protein interactions.</title>
        <authorList>
            <person name="Mayya V."/>
            <person name="Lundgren D.H."/>
            <person name="Hwang S.-I."/>
            <person name="Rezaul K."/>
            <person name="Wu L."/>
            <person name="Eng J.K."/>
            <person name="Rodionov V."/>
            <person name="Han D.K."/>
        </authorList>
    </citation>
    <scope>PHOSPHORYLATION [LARGE SCALE ANALYSIS] AT SER-743 AND SER-751</scope>
    <scope>IDENTIFICATION BY MASS SPECTROMETRY [LARGE SCALE ANALYSIS]</scope>
    <source>
        <tissue>Leukemic T-cell</tissue>
    </source>
</reference>
<reference key="14">
    <citation type="journal article" date="2010" name="Sci. Signal.">
        <title>Quantitative phosphoproteomics reveals widespread full phosphorylation site occupancy during mitosis.</title>
        <authorList>
            <person name="Olsen J.V."/>
            <person name="Vermeulen M."/>
            <person name="Santamaria A."/>
            <person name="Kumar C."/>
            <person name="Miller M.L."/>
            <person name="Jensen L.J."/>
            <person name="Gnad F."/>
            <person name="Cox J."/>
            <person name="Jensen T.S."/>
            <person name="Nigg E.A."/>
            <person name="Brunak S."/>
            <person name="Mann M."/>
        </authorList>
    </citation>
    <scope>PHOSPHORYLATION [LARGE SCALE ANALYSIS] AT SER-456; SER-593 AND SER-743</scope>
    <scope>IDENTIFICATION BY MASS SPECTROMETRY [LARGE SCALE ANALYSIS]</scope>
    <source>
        <tissue>Cervix carcinoma</tissue>
    </source>
</reference>
<reference key="15">
    <citation type="journal article" date="2011" name="BMC Syst. Biol.">
        <title>Initial characterization of the human central proteome.</title>
        <authorList>
            <person name="Burkard T.R."/>
            <person name="Planyavsky M."/>
            <person name="Kaupe I."/>
            <person name="Breitwieser F.P."/>
            <person name="Buerckstuemmer T."/>
            <person name="Bennett K.L."/>
            <person name="Superti-Furga G."/>
            <person name="Colinge J."/>
        </authorList>
    </citation>
    <scope>IDENTIFICATION BY MASS SPECTROMETRY [LARGE SCALE ANALYSIS]</scope>
</reference>
<reference key="16">
    <citation type="journal article" date="2011" name="Mol. Cell. Proteomics">
        <title>The first identification of lysine malonylation substrates and its regulatory enzyme.</title>
        <authorList>
            <person name="Peng C."/>
            <person name="Lu Z."/>
            <person name="Xie Z."/>
            <person name="Cheng Z."/>
            <person name="Chen Y."/>
            <person name="Tan M."/>
            <person name="Luo H."/>
            <person name="Zhang Y."/>
            <person name="He W."/>
            <person name="Yang K."/>
            <person name="Zwaans B.M."/>
            <person name="Tishkoff D."/>
            <person name="Ho L."/>
            <person name="Lombard D."/>
            <person name="He T.C."/>
            <person name="Dai J."/>
            <person name="Verdin E."/>
            <person name="Ye Y."/>
            <person name="Zhao Y."/>
        </authorList>
    </citation>
    <scope>MALONYLATION AT LYS-586</scope>
</reference>
<reference key="17">
    <citation type="journal article" date="2011" name="Sci. Signal.">
        <title>System-wide temporal characterization of the proteome and phosphoproteome of human embryonic stem cell differentiation.</title>
        <authorList>
            <person name="Rigbolt K.T."/>
            <person name="Prokhorova T.A."/>
            <person name="Akimov V."/>
            <person name="Henningsen J."/>
            <person name="Johansen P.T."/>
            <person name="Kratchmarova I."/>
            <person name="Kassem M."/>
            <person name="Mann M."/>
            <person name="Olsen J.V."/>
            <person name="Blagoev B."/>
        </authorList>
    </citation>
    <scope>PHOSPHORYLATION [LARGE SCALE ANALYSIS] AT SER-473 AND SER-593</scope>
    <scope>IDENTIFICATION BY MASS SPECTROMETRY [LARGE SCALE ANALYSIS]</scope>
</reference>
<reference key="18">
    <citation type="journal article" date="2012" name="Am. J. Hum. Genet.">
        <title>Mutations in NSUN2 cause autosomal-recessive intellectual disability.</title>
        <authorList>
            <person name="Abbasi-Moheb L."/>
            <person name="Mertel S."/>
            <person name="Gonsior M."/>
            <person name="Nouri-Vahid L."/>
            <person name="Kahrizi K."/>
            <person name="Cirak S."/>
            <person name="Wieczorek D."/>
            <person name="Motazacker M.M."/>
            <person name="Esmaeeli-Nieh S."/>
            <person name="Cremer K."/>
            <person name="Weissmann R."/>
            <person name="Tzschach A."/>
            <person name="Garshasbi M."/>
            <person name="Abedini S.S."/>
            <person name="Najmabadi H."/>
            <person name="Ropers H.H."/>
            <person name="Sigrist S.J."/>
            <person name="Kuss A.W."/>
        </authorList>
    </citation>
    <scope>INVOLVEMENT IN MRT5</scope>
    <scope>TISSUE SPECIFICITY</scope>
</reference>
<reference key="19">
    <citation type="journal article" date="2012" name="Nat. Commun.">
        <title>The tRNA methyltransferase NSun2 stabilizes p16INK[4] mRNA by methylating the 3'-untranslated region of p16.</title>
        <authorList>
            <person name="Zhang X."/>
            <person name="Liu Z."/>
            <person name="Yi J."/>
            <person name="Tang H."/>
            <person name="Xing J."/>
            <person name="Yu M."/>
            <person name="Tong T."/>
            <person name="Shang Y."/>
            <person name="Gorospe M."/>
            <person name="Wang W."/>
        </authorList>
    </citation>
    <scope>FUNCTION</scope>
    <scope>CATALYTIC ACTIVITY</scope>
</reference>
<reference key="20">
    <citation type="journal article" date="2012" name="RNA Biol.">
        <title>The human tRNA m (5) C methyltransferase Misu is multisite-specific.</title>
        <authorList>
            <person name="Auxilien S."/>
            <person name="Guerineau V."/>
            <person name="Szweykowska-Kulinska Z."/>
            <person name="Golinelli-Pimpaneau B."/>
        </authorList>
    </citation>
    <scope>FUNCTION</scope>
    <scope>ACTIVITY REGULATION</scope>
</reference>
<reference key="21">
    <citation type="journal article" date="2013" name="Cell Rep.">
        <title>NSun2-mediated cytosine-5 methylation of vault noncoding RNA determines its processing into regulatory small RNAs.</title>
        <authorList>
            <person name="Hussain S."/>
            <person name="Sajini A.A."/>
            <person name="Blanco S."/>
            <person name="Dietmann S."/>
            <person name="Lombard P."/>
            <person name="Sugimoto Y."/>
            <person name="Paramor M."/>
            <person name="Gleeson J.G."/>
            <person name="Odom D.T."/>
            <person name="Ule J."/>
            <person name="Frye M."/>
        </authorList>
    </citation>
    <scope>FUNCTION</scope>
</reference>
<reference key="22">
    <citation type="journal article" date="2013" name="J. Proteome Res.">
        <title>Toward a comprehensive characterization of a human cancer cell phosphoproteome.</title>
        <authorList>
            <person name="Zhou H."/>
            <person name="Di Palma S."/>
            <person name="Preisinger C."/>
            <person name="Peng M."/>
            <person name="Polat A.N."/>
            <person name="Heck A.J."/>
            <person name="Mohammed S."/>
        </authorList>
    </citation>
    <scope>PHOSPHORYLATION [LARGE SCALE ANALYSIS] AT SER-456; SER-593; SER-743 AND SER-751</scope>
    <scope>IDENTIFICATION BY MASS SPECTROMETRY [LARGE SCALE ANALYSIS]</scope>
    <source>
        <tissue>Cervix carcinoma</tissue>
        <tissue>Erythroleukemia</tissue>
    </source>
</reference>
<reference key="23">
    <citation type="journal article" date="2014" name="J. Proteomics">
        <title>An enzyme assisted RP-RPLC approach for in-depth analysis of human liver phosphoproteome.</title>
        <authorList>
            <person name="Bian Y."/>
            <person name="Song C."/>
            <person name="Cheng K."/>
            <person name="Dong M."/>
            <person name="Wang F."/>
            <person name="Huang J."/>
            <person name="Sun D."/>
            <person name="Wang L."/>
            <person name="Ye M."/>
            <person name="Zou H."/>
        </authorList>
    </citation>
    <scope>PHOSPHORYLATION [LARGE SCALE ANALYSIS] AT SER-456; SER-743 AND SER-751</scope>
    <scope>IDENTIFICATION BY MASS SPECTROMETRY [LARGE SCALE ANALYSIS]</scope>
    <source>
        <tissue>Liver</tissue>
    </source>
</reference>
<reference key="24">
    <citation type="journal article" date="2014" name="Nat. Struct. Mol. Biol.">
        <title>Uncovering global SUMOylation signaling networks in a site-specific manner.</title>
        <authorList>
            <person name="Hendriks I.A."/>
            <person name="D'Souza R.C."/>
            <person name="Yang B."/>
            <person name="Verlaan-de Vries M."/>
            <person name="Mann M."/>
            <person name="Vertegaal A.C."/>
        </authorList>
    </citation>
    <scope>SUMOYLATION [LARGE SCALE ANALYSIS] AT LYS-640</scope>
    <scope>IDENTIFICATION BY MASS SPECTROMETRY [LARGE SCALE ANALYSIS]</scope>
</reference>
<reference key="25">
    <citation type="journal article" date="2017" name="Cell Res.">
        <title>5-methylcytosine promotes mRNA export - NSUN2 as the methyltransferase and ALYREF as an m5C reader.</title>
        <authorList>
            <person name="Yang X."/>
            <person name="Yang Y."/>
            <person name="Sun B.F."/>
            <person name="Chen Y.S."/>
            <person name="Xu J.W."/>
            <person name="Lai W.Y."/>
            <person name="Li A."/>
            <person name="Wang X."/>
            <person name="Bhattarai D.P."/>
            <person name="Xiao W."/>
            <person name="Sun H.Y."/>
            <person name="Zhu Q."/>
            <person name="Ma H.L."/>
            <person name="Adhikari S."/>
            <person name="Sun M."/>
            <person name="Hao Y.J."/>
            <person name="Zhang B."/>
            <person name="Huang C.M."/>
            <person name="Huang N."/>
            <person name="Jiang G.B."/>
            <person name="Zhao Y.L."/>
            <person name="Wang H.L."/>
            <person name="Sun Y.P."/>
            <person name="Yang Y.G."/>
        </authorList>
    </citation>
    <scope>FUNCTION</scope>
    <scope>CATALYTIC ACTIVITY</scope>
    <scope>ACTIVE SITE</scope>
    <scope>MUTAGENESIS OF CYS-271 AND CYS-321</scope>
</reference>
<reference key="26">
    <citation type="journal article" date="2017" name="Nat. Struct. Mol. Biol.">
        <title>Site-specific mapping of the human SUMO proteome reveals co-modification with phosphorylation.</title>
        <authorList>
            <person name="Hendriks I.A."/>
            <person name="Lyon D."/>
            <person name="Young C."/>
            <person name="Jensen L.J."/>
            <person name="Vertegaal A.C."/>
            <person name="Nielsen M.L."/>
        </authorList>
    </citation>
    <scope>SUMOYLATION [LARGE SCALE ANALYSIS] AT LYS-46; LYS-464; LYS-470; LYS-511; LYS-516; LYS-586; LYS-654 AND LYS-660</scope>
    <scope>IDENTIFICATION BY MASS SPECTROMETRY [LARGE SCALE ANALYSIS]</scope>
</reference>
<reference key="27">
    <citation type="journal article" date="2019" name="Nat. Cell Biol.">
        <title>5-methylcytosine promotes pathogenesis of bladder cancer through stabilizing mRNAs.</title>
        <authorList>
            <person name="Chen X."/>
            <person name="Li A."/>
            <person name="Sun B.F."/>
            <person name="Yang Y."/>
            <person name="Han Y.N."/>
            <person name="Yuan X."/>
            <person name="Chen R.X."/>
            <person name="Wei W.S."/>
            <person name="Liu Y."/>
            <person name="Gao C.C."/>
            <person name="Chen Y.S."/>
            <person name="Zhang M."/>
            <person name="Ma X.D."/>
            <person name="Liu Z.W."/>
            <person name="Luo J.H."/>
            <person name="Lyu C."/>
            <person name="Wang H.L."/>
            <person name="Ma J."/>
            <person name="Zhao Y.L."/>
            <person name="Zhou F.J."/>
            <person name="Huang Y."/>
            <person name="Xie D."/>
            <person name="Yang Y.G."/>
        </authorList>
    </citation>
    <scope>FUNCTION</scope>
    <scope>CATALYTIC ACTIVITY</scope>
    <scope>ACTIVE SITE</scope>
    <scope>MUTAGENESIS OF CYS-271 AND CYS-321</scope>
</reference>
<reference key="28">
    <citation type="journal article" date="2019" name="Nat. Commun.">
        <title>Loss of 5-methylcytosine alters the biogenesis of vault-derived small RNAs to coordinate epidermal differentiation.</title>
        <authorList>
            <person name="Sajini A.A."/>
            <person name="Choudhury N.R."/>
            <person name="Wagner R.E."/>
            <person name="Borneloev S."/>
            <person name="Selmi T."/>
            <person name="Spanos C."/>
            <person name="Dietmann S."/>
            <person name="Rappsilber J."/>
            <person name="Michlewski G."/>
            <person name="Frye M."/>
        </authorList>
    </citation>
    <scope>FUNCTION</scope>
    <scope>CATALYTIC ACTIVITY</scope>
    <scope>MUTAGENESIS OF LYS-190</scope>
</reference>
<reference key="29">
    <citation type="journal article" date="2019" name="Nucleic Acids Res.">
        <title>NSUN2 introduces 5-methylcytosines in mammalian mitochondrial tRNAs.</title>
        <authorList>
            <person name="Van Haute L."/>
            <person name="Lee S.Y."/>
            <person name="McCann B.J."/>
            <person name="Powell C.A."/>
            <person name="Bansal D."/>
            <person name="Vasiliauskaite L."/>
            <person name="Garone C."/>
            <person name="Shin S."/>
            <person name="Kim J.S."/>
            <person name="Frye M."/>
            <person name="Gleeson J.G."/>
            <person name="Miska E.A."/>
            <person name="Rhee H.W."/>
            <person name="Minczuk M."/>
        </authorList>
    </citation>
    <scope>FUNCTION</scope>
    <scope>CATALYTIC ACTIVITY</scope>
    <scope>SUBCELLULAR LOCATION</scope>
</reference>
<reference key="30">
    <citation type="journal article" date="2019" name="Nucleic Acids Res.">
        <title>Mammalian NSUN2 introduces 5-methylcytidines into mitochondrial tRNAs.</title>
        <authorList>
            <person name="Shinoda S."/>
            <person name="Kitagawa S."/>
            <person name="Nakagawa S."/>
            <person name="Wei F.Y."/>
            <person name="Tomizawa K."/>
            <person name="Araki K."/>
            <person name="Araki M."/>
            <person name="Suzuki T."/>
            <person name="Suzuki T."/>
        </authorList>
    </citation>
    <scope>SUBCELLULAR LOCATION</scope>
</reference>
<reference key="31">
    <citation type="journal article" date="2019" name="PLoS Biol.">
        <title>Cytosine-5 RNA methylation links protein synthesis to cell metabolism.</title>
        <authorList>
            <person name="Gkatza N.A."/>
            <person name="Castro C."/>
            <person name="Harvey R.F."/>
            <person name="Heiss M."/>
            <person name="Popis M.C."/>
            <person name="Blanco S."/>
            <person name="Borneloev S."/>
            <person name="Sajini A.A."/>
            <person name="Gleeson J.G."/>
            <person name="Griffin J.L."/>
            <person name="West J.A."/>
            <person name="Kellner S."/>
            <person name="Willis A.E."/>
            <person name="Dietmann S."/>
            <person name="Frye M."/>
        </authorList>
    </citation>
    <scope>FUNCTION</scope>
    <scope>MUTAGENESIS OF LYS-190</scope>
</reference>
<reference key="32">
    <citation type="journal article" date="2021" name="Nat. Chem. Biol.">
        <title>Activity-based RNA-modifying enzyme probing reveals DUS3L-mediated dihydrouridylation.</title>
        <authorList>
            <person name="Dai W."/>
            <person name="Li A."/>
            <person name="Yu N.J."/>
            <person name="Nguyen T."/>
            <person name="Leach R.W."/>
            <person name="Wuehr M."/>
            <person name="Kleiner R.E."/>
        </authorList>
    </citation>
    <scope>FUNCTION</scope>
    <scope>CATALYTIC ACTIVITY</scope>
</reference>
<reference key="33">
    <citation type="journal article" date="2012" name="Am. J. Hum. Genet.">
        <title>Mutation in NSUN2, which encodes an RNA methyltransferase, causes autosomal-recessive intellectual disability.</title>
        <authorList>
            <person name="Khan M.A."/>
            <person name="Rafiq M.A."/>
            <person name="Noor A."/>
            <person name="Hussain S."/>
            <person name="Flores J.V."/>
            <person name="Rupp V."/>
            <person name="Vincent A.K."/>
            <person name="Malli R."/>
            <person name="Ali G."/>
            <person name="Khan F.S."/>
            <person name="Ishak G.E."/>
            <person name="Doherty D."/>
            <person name="Weksberg R."/>
            <person name="Ayub M."/>
            <person name="Windpassinger C."/>
            <person name="Ibrahim S."/>
            <person name="Frye M."/>
            <person name="Ansar M."/>
            <person name="Vincent J.B."/>
        </authorList>
    </citation>
    <scope>VARIANT MRT5 ARG-679</scope>
    <scope>CHARACTERIZATION OF VARIANT MRT5 ARG-679</scope>
</reference>